<keyword id="KW-0025">Alternative splicing</keyword>
<keyword id="KW-0238">DNA-binding</keyword>
<keyword id="KW-0479">Metal-binding</keyword>
<keyword id="KW-0539">Nucleus</keyword>
<keyword id="KW-1185">Reference proteome</keyword>
<keyword id="KW-0678">Repressor</keyword>
<keyword id="KW-0346">Stress response</keyword>
<keyword id="KW-0804">Transcription</keyword>
<keyword id="KW-0805">Transcription regulation</keyword>
<keyword id="KW-0862">Zinc</keyword>
<keyword id="KW-0863">Zinc-finger</keyword>
<proteinExistence type="evidence at transcript level"/>
<evidence type="ECO:0000255" key="1">
    <source>
        <dbReference type="PROSITE-ProRule" id="PRU00047"/>
    </source>
</evidence>
<evidence type="ECO:0000255" key="2">
    <source>
        <dbReference type="PROSITE-ProRule" id="PRU00625"/>
    </source>
</evidence>
<evidence type="ECO:0000256" key="3">
    <source>
        <dbReference type="SAM" id="MobiDB-lite"/>
    </source>
</evidence>
<evidence type="ECO:0000269" key="4">
    <source>
    </source>
</evidence>
<evidence type="ECO:0000269" key="5">
    <source>
    </source>
</evidence>
<evidence type="ECO:0000303" key="6">
    <source>
    </source>
</evidence>
<evidence type="ECO:0000305" key="7"/>
<evidence type="ECO:0000312" key="8">
    <source>
        <dbReference type="EMBL" id="AAK31280.1"/>
    </source>
</evidence>
<evidence type="ECO:0000312" key="9">
    <source>
        <dbReference type="EMBL" id="AAP55017.1"/>
    </source>
</evidence>
<evidence type="ECO:0000312" key="10">
    <source>
        <dbReference type="EMBL" id="BAT12060.1"/>
    </source>
</evidence>
<evidence type="ECO:0000312" key="11">
    <source>
        <dbReference type="EMBL" id="EAZ16977.1"/>
    </source>
</evidence>
<accession>Q7XC57</accession>
<accession>Q108Y2</accession>
<accession>Q8H1D0</accession>
<accession>Q9AUT3</accession>
<gene>
    <name evidence="6" type="primary">MYBS3</name>
    <name evidence="9" type="ordered locus">LOC_Os10g41200</name>
    <name evidence="10" type="ordered locus">Os10g0561400</name>
    <name evidence="11" type="ORF">OsJ_32461</name>
    <name evidence="8" type="ORF">OSJNBb0089A17.8</name>
</gene>
<feature type="chain" id="PRO_0000439177" description="Transcription factor MYBS3">
    <location>
        <begin position="1"/>
        <end position="318"/>
    </location>
</feature>
<feature type="domain" description="HTH myb-type" evidence="2">
    <location>
        <begin position="88"/>
        <end position="144"/>
    </location>
</feature>
<feature type="zinc finger region" description="CCHC-type" evidence="1">
    <location>
        <begin position="3"/>
        <end position="20"/>
    </location>
</feature>
<feature type="DNA-binding region" description="H-T-H motif" evidence="2">
    <location>
        <begin position="116"/>
        <end position="140"/>
    </location>
</feature>
<feature type="region of interest" description="Disordered" evidence="3">
    <location>
        <begin position="1"/>
        <end position="20"/>
    </location>
</feature>
<feature type="region of interest" description="Disordered" evidence="3">
    <location>
        <begin position="50"/>
        <end position="98"/>
    </location>
</feature>
<feature type="region of interest" description="Disordered" evidence="3">
    <location>
        <begin position="159"/>
        <end position="200"/>
    </location>
</feature>
<feature type="compositionally biased region" description="Polar residues" evidence="3">
    <location>
        <begin position="8"/>
        <end position="18"/>
    </location>
</feature>
<feature type="compositionally biased region" description="Low complexity" evidence="3">
    <location>
        <begin position="50"/>
        <end position="77"/>
    </location>
</feature>
<feature type="splice variant" id="VSP_058801" description="In isoform 2.">
    <original>MTRRCSHCSHNGHNSRTCPNRGVKIFGVRLTDGSIRKSASMGNLSLLSSAAGSTSGGASPADGPDAAPTAADGYASDDFVQGSSSATRDRKK</original>
    <variation>MFLIKMTLT</variation>
    <location>
        <begin position="1"/>
        <end position="92"/>
    </location>
</feature>
<feature type="sequence conflict" description="In Ref. 1; AAN63154." evidence="7" ref="1">
    <original>S</original>
    <variation>F</variation>
    <location>
        <position position="83"/>
    </location>
</feature>
<feature type="sequence conflict" description="In Ref. 1; AAN63154." evidence="7" ref="1">
    <original>R</original>
    <variation>K</variation>
    <location>
        <position position="189"/>
    </location>
</feature>
<feature type="sequence conflict" description="In Ref. 1; AAN63154." evidence="7" ref="1">
    <original>V</original>
    <variation>E</variation>
    <location>
        <position position="290"/>
    </location>
</feature>
<reference key="1">
    <citation type="journal article" date="2002" name="Plant Cell">
        <title>Three novel MYB proteins with one DNA binding repeat mediate sugar and hormone regulation of alpha-amylase gene expression.</title>
        <authorList>
            <person name="Lu C.-A."/>
            <person name="Ho T.-H."/>
            <person name="Ho S.-L."/>
            <person name="Yu S.-M."/>
        </authorList>
    </citation>
    <scope>NUCLEOTIDE SEQUENCE [MRNA] (ISOFORM 1)</scope>
    <scope>FUNCTION</scope>
    <scope>TISSUE SPECIFICITY</scope>
    <scope>INDUCTION BY SUCROSE AND GIBBERELLIC ACID</scope>
</reference>
<reference key="2">
    <citation type="submission" date="2008-06" db="EMBL/GenBank/DDBJ databases">
        <authorList>
            <person name="Yoon U.H."/>
            <person name="Lee G.S."/>
            <person name="Lee J.S."/>
            <person name="Hahn J.H."/>
            <person name="Kim C.K."/>
            <person name="Yang H.W."/>
            <person name="Choi E.Y."/>
            <person name="Lee J.H."/>
            <person name="Suh S.C."/>
            <person name="Kim Y.H."/>
        </authorList>
    </citation>
    <scope>NUCLEOTIDE SEQUENCE [MRNA] (ISOFORM 1)</scope>
    <source>
        <strain>cv. Ilpoombyeo</strain>
        <tissue>Seed</tissue>
    </source>
</reference>
<reference key="3">
    <citation type="journal article" date="2003" name="Science">
        <title>In-depth view of structure, activity, and evolution of rice chromosome 10.</title>
        <authorList>
            <person name="Yu Y."/>
            <person name="Rambo T."/>
            <person name="Currie J."/>
            <person name="Saski C."/>
            <person name="Kim H.-R."/>
            <person name="Collura K."/>
            <person name="Thompson S."/>
            <person name="Simmons J."/>
            <person name="Yang T.-J."/>
            <person name="Nah G."/>
            <person name="Patel A.J."/>
            <person name="Thurmond S."/>
            <person name="Henry D."/>
            <person name="Oates R."/>
            <person name="Palmer M."/>
            <person name="Pries G."/>
            <person name="Gibson J."/>
            <person name="Anderson H."/>
            <person name="Paradkar M."/>
            <person name="Crane L."/>
            <person name="Dale J."/>
            <person name="Carver M.B."/>
            <person name="Wood T."/>
            <person name="Frisch D."/>
            <person name="Engler F."/>
            <person name="Soderlund C."/>
            <person name="Palmer L.E."/>
            <person name="Teytelman L."/>
            <person name="Nascimento L."/>
            <person name="De la Bastide M."/>
            <person name="Spiegel L."/>
            <person name="Ware D."/>
            <person name="O'Shaughnessy A."/>
            <person name="Dike S."/>
            <person name="Dedhia N."/>
            <person name="Preston R."/>
            <person name="Huang E."/>
            <person name="Ferraro K."/>
            <person name="Kuit K."/>
            <person name="Miller B."/>
            <person name="Zutavern T."/>
            <person name="Katzenberger F."/>
            <person name="Muller S."/>
            <person name="Balija V."/>
            <person name="Martienssen R.A."/>
            <person name="Stein L."/>
            <person name="Minx P."/>
            <person name="Johnson D."/>
            <person name="Cordum H."/>
            <person name="Mardis E."/>
            <person name="Cheng Z."/>
            <person name="Jiang J."/>
            <person name="Wilson R."/>
            <person name="McCombie W.R."/>
            <person name="Wing R.A."/>
            <person name="Yuan Q."/>
            <person name="Ouyang S."/>
            <person name="Liu J."/>
            <person name="Jones K.M."/>
            <person name="Gansberger K."/>
            <person name="Moffat K."/>
            <person name="Hill J."/>
            <person name="Tsitrin T."/>
            <person name="Overton L."/>
            <person name="Bera J."/>
            <person name="Kim M."/>
            <person name="Jin S."/>
            <person name="Tallon L."/>
            <person name="Ciecko A."/>
            <person name="Pai G."/>
            <person name="Van Aken S."/>
            <person name="Utterback T."/>
            <person name="Reidmuller S."/>
            <person name="Bormann J."/>
            <person name="Feldblyum T."/>
            <person name="Hsiao J."/>
            <person name="Zismann V."/>
            <person name="Blunt S."/>
            <person name="de Vazeille A.R."/>
            <person name="Shaffer T."/>
            <person name="Koo H."/>
            <person name="Suh B."/>
            <person name="Yang Q."/>
            <person name="Haas B."/>
            <person name="Peterson J."/>
            <person name="Pertea M."/>
            <person name="Volfovsky N."/>
            <person name="Wortman J."/>
            <person name="White O."/>
            <person name="Salzberg S.L."/>
            <person name="Fraser C.M."/>
            <person name="Buell C.R."/>
            <person name="Messing J."/>
            <person name="Song R."/>
            <person name="Fuks G."/>
            <person name="Llaca V."/>
            <person name="Kovchak S."/>
            <person name="Young S."/>
            <person name="Bowers J.E."/>
            <person name="Paterson A.H."/>
            <person name="Johns M.A."/>
            <person name="Mao L."/>
            <person name="Pan H."/>
            <person name="Dean R.A."/>
        </authorList>
    </citation>
    <scope>NUCLEOTIDE SEQUENCE [LARGE SCALE GENOMIC DNA]</scope>
    <source>
        <strain>cv. Nipponbare</strain>
    </source>
</reference>
<reference key="4">
    <citation type="journal article" date="2005" name="Nature">
        <title>The map-based sequence of the rice genome.</title>
        <authorList>
            <consortium name="International rice genome sequencing project (IRGSP)"/>
        </authorList>
    </citation>
    <scope>NUCLEOTIDE SEQUENCE [LARGE SCALE GENOMIC DNA]</scope>
    <source>
        <strain>cv. Nipponbare</strain>
    </source>
</reference>
<reference key="5">
    <citation type="journal article" date="2013" name="Rice">
        <title>Improvement of the Oryza sativa Nipponbare reference genome using next generation sequence and optical map data.</title>
        <authorList>
            <person name="Kawahara Y."/>
            <person name="de la Bastide M."/>
            <person name="Hamilton J.P."/>
            <person name="Kanamori H."/>
            <person name="McCombie W.R."/>
            <person name="Ouyang S."/>
            <person name="Schwartz D.C."/>
            <person name="Tanaka T."/>
            <person name="Wu J."/>
            <person name="Zhou S."/>
            <person name="Childs K.L."/>
            <person name="Davidson R.M."/>
            <person name="Lin H."/>
            <person name="Quesada-Ocampo L."/>
            <person name="Vaillancourt B."/>
            <person name="Sakai H."/>
            <person name="Lee S.S."/>
            <person name="Kim J."/>
            <person name="Numa H."/>
            <person name="Itoh T."/>
            <person name="Buell C.R."/>
            <person name="Matsumoto T."/>
        </authorList>
    </citation>
    <scope>GENOME REANNOTATION</scope>
    <source>
        <strain>cv. Nipponbare</strain>
    </source>
</reference>
<reference key="6">
    <citation type="journal article" date="2005" name="PLoS Biol.">
        <title>The genomes of Oryza sativa: a history of duplications.</title>
        <authorList>
            <person name="Yu J."/>
            <person name="Wang J."/>
            <person name="Lin W."/>
            <person name="Li S."/>
            <person name="Li H."/>
            <person name="Zhou J."/>
            <person name="Ni P."/>
            <person name="Dong W."/>
            <person name="Hu S."/>
            <person name="Zeng C."/>
            <person name="Zhang J."/>
            <person name="Zhang Y."/>
            <person name="Li R."/>
            <person name="Xu Z."/>
            <person name="Li S."/>
            <person name="Li X."/>
            <person name="Zheng H."/>
            <person name="Cong L."/>
            <person name="Lin L."/>
            <person name="Yin J."/>
            <person name="Geng J."/>
            <person name="Li G."/>
            <person name="Shi J."/>
            <person name="Liu J."/>
            <person name="Lv H."/>
            <person name="Li J."/>
            <person name="Wang J."/>
            <person name="Deng Y."/>
            <person name="Ran L."/>
            <person name="Shi X."/>
            <person name="Wang X."/>
            <person name="Wu Q."/>
            <person name="Li C."/>
            <person name="Ren X."/>
            <person name="Wang J."/>
            <person name="Wang X."/>
            <person name="Li D."/>
            <person name="Liu D."/>
            <person name="Zhang X."/>
            <person name="Ji Z."/>
            <person name="Zhao W."/>
            <person name="Sun Y."/>
            <person name="Zhang Z."/>
            <person name="Bao J."/>
            <person name="Han Y."/>
            <person name="Dong L."/>
            <person name="Ji J."/>
            <person name="Chen P."/>
            <person name="Wu S."/>
            <person name="Liu J."/>
            <person name="Xiao Y."/>
            <person name="Bu D."/>
            <person name="Tan J."/>
            <person name="Yang L."/>
            <person name="Ye C."/>
            <person name="Zhang J."/>
            <person name="Xu J."/>
            <person name="Zhou Y."/>
            <person name="Yu Y."/>
            <person name="Zhang B."/>
            <person name="Zhuang S."/>
            <person name="Wei H."/>
            <person name="Liu B."/>
            <person name="Lei M."/>
            <person name="Yu H."/>
            <person name="Li Y."/>
            <person name="Xu H."/>
            <person name="Wei S."/>
            <person name="He X."/>
            <person name="Fang L."/>
            <person name="Zhang Z."/>
            <person name="Zhang Y."/>
            <person name="Huang X."/>
            <person name="Su Z."/>
            <person name="Tong W."/>
            <person name="Li J."/>
            <person name="Tong Z."/>
            <person name="Li S."/>
            <person name="Ye J."/>
            <person name="Wang L."/>
            <person name="Fang L."/>
            <person name="Lei T."/>
            <person name="Chen C.-S."/>
            <person name="Chen H.-C."/>
            <person name="Xu Z."/>
            <person name="Li H."/>
            <person name="Huang H."/>
            <person name="Zhang F."/>
            <person name="Xu H."/>
            <person name="Li N."/>
            <person name="Zhao C."/>
            <person name="Li S."/>
            <person name="Dong L."/>
            <person name="Huang Y."/>
            <person name="Li L."/>
            <person name="Xi Y."/>
            <person name="Qi Q."/>
            <person name="Li W."/>
            <person name="Zhang B."/>
            <person name="Hu W."/>
            <person name="Zhang Y."/>
            <person name="Tian X."/>
            <person name="Jiao Y."/>
            <person name="Liang X."/>
            <person name="Jin J."/>
            <person name="Gao L."/>
            <person name="Zheng W."/>
            <person name="Hao B."/>
            <person name="Liu S.-M."/>
            <person name="Wang W."/>
            <person name="Yuan L."/>
            <person name="Cao M."/>
            <person name="McDermott J."/>
            <person name="Samudrala R."/>
            <person name="Wang J."/>
            <person name="Wong G.K.-S."/>
            <person name="Yang H."/>
        </authorList>
    </citation>
    <scope>NUCLEOTIDE SEQUENCE [LARGE SCALE GENOMIC DNA]</scope>
    <source>
        <strain>cv. Nipponbare</strain>
    </source>
</reference>
<reference key="7">
    <citation type="journal article" date="2003" name="Science">
        <title>Collection, mapping, and annotation of over 28,000 cDNA clones from japonica rice.</title>
        <authorList>
            <consortium name="The rice full-length cDNA consortium"/>
        </authorList>
    </citation>
    <scope>NUCLEOTIDE SEQUENCE [LARGE SCALE MRNA] (ISOFORMS 1 AND 2)</scope>
    <source>
        <strain>cv. Nipponbare</strain>
    </source>
</reference>
<reference key="8">
    <citation type="journal article" date="2010" name="Plant Physiol.">
        <title>A novel MYBS3-dependent pathway confers cold tolerance in rice.</title>
        <authorList>
            <person name="Su C.F."/>
            <person name="Wang Y.C."/>
            <person name="Hsieh T.H."/>
            <person name="Lu C.A."/>
            <person name="Tseng T.H."/>
            <person name="Yu S.M."/>
        </authorList>
    </citation>
    <scope>FUNCTION</scope>
    <scope>SUBCELLULAR LOCATION</scope>
    <scope>INDUCTION</scope>
</reference>
<sequence length="318" mass="34489">MTRRCSHCSHNGHNSRTCPNRGVKIFGVRLTDGSIRKSASMGNLSLLSSAAGSTSGGASPADGPDAAPTAADGYASDDFVQGSSSATRDRKKGVPWTEEEHRRFLLGLQKLGKGDWRGISRNFVVSRTPTQVASHAQKYFIRQSNMTRRKRRSSLFDMVPDESMDLPPLPGGQEPETQVLNQPALPPPREEEEVDSMESDTSAVAESSSASAIMPDNLQSTYPVIVPAYFSPFLQFSVPFWQNQKDEDGPVQETHEIVKPVPVHSKSPINVDELVGMSKLSIGESNQETVSTSLSLNLVGGQNRQSAFHANPPTRAQA</sequence>
<organism>
    <name type="scientific">Oryza sativa subsp. japonica</name>
    <name type="common">Rice</name>
    <dbReference type="NCBI Taxonomy" id="39947"/>
    <lineage>
        <taxon>Eukaryota</taxon>
        <taxon>Viridiplantae</taxon>
        <taxon>Streptophyta</taxon>
        <taxon>Embryophyta</taxon>
        <taxon>Tracheophyta</taxon>
        <taxon>Spermatophyta</taxon>
        <taxon>Magnoliopsida</taxon>
        <taxon>Liliopsida</taxon>
        <taxon>Poales</taxon>
        <taxon>Poaceae</taxon>
        <taxon>BOP clade</taxon>
        <taxon>Oryzoideae</taxon>
        <taxon>Oryzeae</taxon>
        <taxon>Oryzinae</taxon>
        <taxon>Oryza</taxon>
        <taxon>Oryza sativa</taxon>
    </lineage>
</organism>
<dbReference type="EMBL" id="AY151044">
    <property type="protein sequence ID" value="AAN63154.1"/>
    <property type="molecule type" value="mRNA"/>
</dbReference>
<dbReference type="EMBL" id="EU837254">
    <property type="protein sequence ID" value="ACF60472.1"/>
    <property type="molecule type" value="mRNA"/>
</dbReference>
<dbReference type="EMBL" id="AC079890">
    <property type="protein sequence ID" value="AAK31280.1"/>
    <property type="molecule type" value="Genomic_DNA"/>
</dbReference>
<dbReference type="EMBL" id="DP000086">
    <property type="protein sequence ID" value="AAP55017.1"/>
    <property type="molecule type" value="Genomic_DNA"/>
</dbReference>
<dbReference type="EMBL" id="DP000086">
    <property type="protein sequence ID" value="ABG66261.1"/>
    <property type="molecule type" value="Genomic_DNA"/>
</dbReference>
<dbReference type="EMBL" id="AP014966">
    <property type="protein sequence ID" value="BAT12060.1"/>
    <property type="molecule type" value="Genomic_DNA"/>
</dbReference>
<dbReference type="EMBL" id="AP014966">
    <property type="protein sequence ID" value="BAT12061.1"/>
    <property type="molecule type" value="Genomic_DNA"/>
</dbReference>
<dbReference type="EMBL" id="CM000147">
    <property type="protein sequence ID" value="EAZ16977.1"/>
    <property type="molecule type" value="Genomic_DNA"/>
</dbReference>
<dbReference type="EMBL" id="AK059716">
    <property type="protein sequence ID" value="BAG87083.1"/>
    <property type="molecule type" value="mRNA"/>
</dbReference>
<dbReference type="EMBL" id="AK101062">
    <property type="protein sequence ID" value="BAG94895.1"/>
    <property type="molecule type" value="mRNA"/>
</dbReference>
<dbReference type="RefSeq" id="XP_015614288.1">
    <property type="nucleotide sequence ID" value="XM_015758802.1"/>
</dbReference>
<dbReference type="FunCoup" id="Q7XC57">
    <property type="interactions" value="367"/>
</dbReference>
<dbReference type="STRING" id="39947.Q7XC57"/>
<dbReference type="PaxDb" id="39947-Q7XC57"/>
<dbReference type="EnsemblPlants" id="Os10t0561400-02">
    <molecule id="Q7XC57-1"/>
    <property type="protein sequence ID" value="Os10t0561400-02"/>
    <property type="gene ID" value="Os10g0561400"/>
</dbReference>
<dbReference type="Gramene" id="Os10t0561400-02">
    <molecule id="Q7XC57-1"/>
    <property type="protein sequence ID" value="Os10t0561400-02"/>
    <property type="gene ID" value="Os10g0561400"/>
</dbReference>
<dbReference type="eggNOG" id="ENOG502QUPG">
    <property type="taxonomic scope" value="Eukaryota"/>
</dbReference>
<dbReference type="HOGENOM" id="CLU_038424_0_0_1"/>
<dbReference type="InParanoid" id="Q7XC57"/>
<dbReference type="OMA" id="FPFPIWP"/>
<dbReference type="OrthoDB" id="118550at2759"/>
<dbReference type="Proteomes" id="UP000000763">
    <property type="component" value="Chromosome 10"/>
</dbReference>
<dbReference type="Proteomes" id="UP000007752">
    <property type="component" value="Chromosome 10"/>
</dbReference>
<dbReference type="Proteomes" id="UP000059680">
    <property type="component" value="Chromosome 10"/>
</dbReference>
<dbReference type="ExpressionAtlas" id="Q7XC57">
    <property type="expression patterns" value="baseline and differential"/>
</dbReference>
<dbReference type="GO" id="GO:0005634">
    <property type="term" value="C:nucleus"/>
    <property type="evidence" value="ECO:0000314"/>
    <property type="project" value="UniProtKB"/>
</dbReference>
<dbReference type="GO" id="GO:0003677">
    <property type="term" value="F:DNA binding"/>
    <property type="evidence" value="ECO:0007669"/>
    <property type="project" value="UniProtKB-KW"/>
</dbReference>
<dbReference type="GO" id="GO:0003700">
    <property type="term" value="F:DNA-binding transcription factor activity"/>
    <property type="evidence" value="ECO:0000314"/>
    <property type="project" value="UniProtKB"/>
</dbReference>
<dbReference type="GO" id="GO:0008270">
    <property type="term" value="F:zinc ion binding"/>
    <property type="evidence" value="ECO:0007669"/>
    <property type="project" value="UniProtKB-KW"/>
</dbReference>
<dbReference type="GO" id="GO:0045892">
    <property type="term" value="P:negative regulation of DNA-templated transcription"/>
    <property type="evidence" value="ECO:0000314"/>
    <property type="project" value="UniProtKB"/>
</dbReference>
<dbReference type="GO" id="GO:0009723">
    <property type="term" value="P:response to ethylene"/>
    <property type="evidence" value="ECO:0000318"/>
    <property type="project" value="GO_Central"/>
</dbReference>
<dbReference type="GO" id="GO:0009739">
    <property type="term" value="P:response to gibberellin"/>
    <property type="evidence" value="ECO:0000270"/>
    <property type="project" value="UniProtKB"/>
</dbReference>
<dbReference type="GO" id="GO:0009744">
    <property type="term" value="P:response to sucrose"/>
    <property type="evidence" value="ECO:0000270"/>
    <property type="project" value="UniProtKB"/>
</dbReference>
<dbReference type="CDD" id="cd00167">
    <property type="entry name" value="SANT"/>
    <property type="match status" value="1"/>
</dbReference>
<dbReference type="FunFam" id="1.10.10.60:FF:000009">
    <property type="entry name" value="transcription factor MYB1R1"/>
    <property type="match status" value="1"/>
</dbReference>
<dbReference type="Gene3D" id="1.10.10.60">
    <property type="entry name" value="Homeodomain-like"/>
    <property type="match status" value="1"/>
</dbReference>
<dbReference type="InterPro" id="IPR009057">
    <property type="entry name" value="Homeodomain-like_sf"/>
</dbReference>
<dbReference type="InterPro" id="IPR017930">
    <property type="entry name" value="Myb_dom"/>
</dbReference>
<dbReference type="InterPro" id="IPR006447">
    <property type="entry name" value="Myb_dom_plants"/>
</dbReference>
<dbReference type="InterPro" id="IPR052245">
    <property type="entry name" value="Plant_Stress_Dev_TF"/>
</dbReference>
<dbReference type="InterPro" id="IPR001005">
    <property type="entry name" value="SANT/Myb"/>
</dbReference>
<dbReference type="InterPro" id="IPR017884">
    <property type="entry name" value="SANT_dom"/>
</dbReference>
<dbReference type="NCBIfam" id="TIGR01557">
    <property type="entry name" value="myb_SHAQKYF"/>
    <property type="match status" value="1"/>
</dbReference>
<dbReference type="PANTHER" id="PTHR44191">
    <property type="entry name" value="TRANSCRIPTION FACTOR KUA1"/>
    <property type="match status" value="1"/>
</dbReference>
<dbReference type="PANTHER" id="PTHR44191:SF26">
    <property type="entry name" value="TRANSCRIPTION FACTOR KUA1"/>
    <property type="match status" value="1"/>
</dbReference>
<dbReference type="Pfam" id="PF00249">
    <property type="entry name" value="Myb_DNA-binding"/>
    <property type="match status" value="1"/>
</dbReference>
<dbReference type="SMART" id="SM00717">
    <property type="entry name" value="SANT"/>
    <property type="match status" value="1"/>
</dbReference>
<dbReference type="SUPFAM" id="SSF46689">
    <property type="entry name" value="Homeodomain-like"/>
    <property type="match status" value="1"/>
</dbReference>
<dbReference type="PROSITE" id="PS51294">
    <property type="entry name" value="HTH_MYB"/>
    <property type="match status" value="1"/>
</dbReference>
<protein>
    <recommendedName>
        <fullName evidence="6">Transcription factor MYBS3</fullName>
    </recommendedName>
    <alternativeName>
        <fullName evidence="6">Myb-related protein S3</fullName>
        <shortName evidence="6">OsMYBS3</shortName>
    </alternativeName>
</protein>
<name>MYBS3_ORYSJ</name>
<comment type="function">
    <text evidence="4 5">Transcription repressor that binds to 5'-TATCCA-3' elements in gene promoters. Contributes to the sugar-repressed transcription of promoters containing SRS or 5'-TATCCA-3' elements. Transcription repressor involved in a cold stress response pathway that confers cold tolerance. Suppresses the DREB1-dependent signaling pathway under prolonged cold stress. DREB1 responds quickly and transiently while MYBS3 responds slowly to cold stress. They may act sequentially and complementarily for adaptation to short- and long-term cold stress (PubMed:20130099).</text>
</comment>
<comment type="subcellular location">
    <subcellularLocation>
        <location evidence="2 5">Nucleus</location>
    </subcellularLocation>
</comment>
<comment type="alternative products">
    <event type="alternative splicing"/>
    <isoform>
        <id>Q7XC57-1</id>
        <name>1</name>
        <sequence type="displayed"/>
    </isoform>
    <isoform>
        <id>Q7XC57-2</id>
        <name>2</name>
        <sequence type="described" ref="VSP_058801"/>
    </isoform>
</comment>
<comment type="tissue specificity">
    <text evidence="4">Expressed in all tissues, with the highest level in senescent leaves.</text>
</comment>
<comment type="induction">
    <text evidence="4 5">Repressed by sucrose and gibberellic acid (GA) (PubMed:12172034). Induced by cold stress in roots and shoots. Induced by salt stress in shoots. Down-regulated by abscisic aci (ABA) in shoots (PubMed:20130099).</text>
</comment>
<comment type="miscellaneous">
    <text evidence="5">Plants over-expressing MYBS3 show increased tolerance to cold stress.</text>
</comment>